<proteinExistence type="predicted"/>
<evidence type="ECO:0000255" key="1"/>
<evidence type="ECO:0000305" key="2"/>
<comment type="subcellular location">
    <subcellularLocation>
        <location evidence="2">Membrane</location>
        <topology evidence="2">Single-pass membrane protein</topology>
    </subcellularLocation>
</comment>
<dbReference type="EMBL" id="L77117">
    <property type="protein sequence ID" value="AAB99405.1"/>
    <property type="molecule type" value="Genomic_DNA"/>
</dbReference>
<dbReference type="PIR" id="B64474">
    <property type="entry name" value="B64474"/>
</dbReference>
<dbReference type="RefSeq" id="WP_010870912.1">
    <property type="nucleotide sequence ID" value="NC_000909.1"/>
</dbReference>
<dbReference type="FunCoup" id="Q58790">
    <property type="interactions" value="1"/>
</dbReference>
<dbReference type="STRING" id="243232.MJ_1395"/>
<dbReference type="PaxDb" id="243232-MJ_1395"/>
<dbReference type="EnsemblBacteria" id="AAB99405">
    <property type="protein sequence ID" value="AAB99405"/>
    <property type="gene ID" value="MJ_1395"/>
</dbReference>
<dbReference type="GeneID" id="71696693"/>
<dbReference type="KEGG" id="mja:MJ_1395"/>
<dbReference type="eggNOG" id="arCOG07532">
    <property type="taxonomic scope" value="Archaea"/>
</dbReference>
<dbReference type="HOGENOM" id="CLU_1912353_0_0_2"/>
<dbReference type="InParanoid" id="Q58790"/>
<dbReference type="PhylomeDB" id="Q58790"/>
<dbReference type="Proteomes" id="UP000000805">
    <property type="component" value="Chromosome"/>
</dbReference>
<dbReference type="GO" id="GO:0016020">
    <property type="term" value="C:membrane"/>
    <property type="evidence" value="ECO:0007669"/>
    <property type="project" value="UniProtKB-SubCell"/>
</dbReference>
<protein>
    <recommendedName>
        <fullName>Uncharacterized protein MJ1395</fullName>
    </recommendedName>
</protein>
<gene>
    <name type="ordered locus">MJ1395</name>
</gene>
<accession>Q58790</accession>
<name>Y1395_METJA</name>
<reference key="1">
    <citation type="journal article" date="1996" name="Science">
        <title>Complete genome sequence of the methanogenic archaeon, Methanococcus jannaschii.</title>
        <authorList>
            <person name="Bult C.J."/>
            <person name="White O."/>
            <person name="Olsen G.J."/>
            <person name="Zhou L."/>
            <person name="Fleischmann R.D."/>
            <person name="Sutton G.G."/>
            <person name="Blake J.A."/>
            <person name="FitzGerald L.M."/>
            <person name="Clayton R.A."/>
            <person name="Gocayne J.D."/>
            <person name="Kerlavage A.R."/>
            <person name="Dougherty B.A."/>
            <person name="Tomb J.-F."/>
            <person name="Adams M.D."/>
            <person name="Reich C.I."/>
            <person name="Overbeek R."/>
            <person name="Kirkness E.F."/>
            <person name="Weinstock K.G."/>
            <person name="Merrick J.M."/>
            <person name="Glodek A."/>
            <person name="Scott J.L."/>
            <person name="Geoghagen N.S.M."/>
            <person name="Weidman J.F."/>
            <person name="Fuhrmann J.L."/>
            <person name="Nguyen D."/>
            <person name="Utterback T.R."/>
            <person name="Kelley J.M."/>
            <person name="Peterson J.D."/>
            <person name="Sadow P.W."/>
            <person name="Hanna M.C."/>
            <person name="Cotton M.D."/>
            <person name="Roberts K.M."/>
            <person name="Hurst M.A."/>
            <person name="Kaine B.P."/>
            <person name="Borodovsky M."/>
            <person name="Klenk H.-P."/>
            <person name="Fraser C.M."/>
            <person name="Smith H.O."/>
            <person name="Woese C.R."/>
            <person name="Venter J.C."/>
        </authorList>
    </citation>
    <scope>NUCLEOTIDE SEQUENCE [LARGE SCALE GENOMIC DNA]</scope>
    <source>
        <strain>ATCC 43067 / DSM 2661 / JAL-1 / JCM 10045 / NBRC 100440</strain>
    </source>
</reference>
<organism>
    <name type="scientific">Methanocaldococcus jannaschii (strain ATCC 43067 / DSM 2661 / JAL-1 / JCM 10045 / NBRC 100440)</name>
    <name type="common">Methanococcus jannaschii</name>
    <dbReference type="NCBI Taxonomy" id="243232"/>
    <lineage>
        <taxon>Archaea</taxon>
        <taxon>Methanobacteriati</taxon>
        <taxon>Methanobacteriota</taxon>
        <taxon>Methanomada group</taxon>
        <taxon>Methanococci</taxon>
        <taxon>Methanococcales</taxon>
        <taxon>Methanocaldococcaceae</taxon>
        <taxon>Methanocaldococcus</taxon>
    </lineage>
</organism>
<sequence>MDVNVSYKDTYSVITYQVWEPIDGGKNITLIIEYDADIVDNGILFKTVSIPIGGDLNIKNFHINFVSPYYLTYQEPDGNNFQIPKKTLLIINAEFSILPLPKLPVHGYVVFWLSILCILIIIFVYTELRRKK</sequence>
<keyword id="KW-0472">Membrane</keyword>
<keyword id="KW-1185">Reference proteome</keyword>
<keyword id="KW-0812">Transmembrane</keyword>
<keyword id="KW-1133">Transmembrane helix</keyword>
<feature type="chain" id="PRO_0000107310" description="Uncharacterized protein MJ1395">
    <location>
        <begin position="1"/>
        <end position="132"/>
    </location>
</feature>
<feature type="transmembrane region" description="Helical" evidence="1">
    <location>
        <begin position="105"/>
        <end position="125"/>
    </location>
</feature>